<keyword id="KW-0687">Ribonucleoprotein</keyword>
<keyword id="KW-0689">Ribosomal protein</keyword>
<protein>
    <recommendedName>
        <fullName evidence="1">Large ribosomal subunit protein bL12</fullName>
    </recommendedName>
    <alternativeName>
        <fullName evidence="2">50S ribosomal protein L7/L12</fullName>
    </alternativeName>
</protein>
<name>RL7_JANMA</name>
<reference key="1">
    <citation type="journal article" date="2007" name="PLoS Genet.">
        <title>Genome analysis of Minibacterium massiliensis highlights the convergent evolution of water-living bacteria.</title>
        <authorList>
            <person name="Audic S."/>
            <person name="Robert C."/>
            <person name="Campagna B."/>
            <person name="Parinello H."/>
            <person name="Claverie J.-M."/>
            <person name="Raoult D."/>
            <person name="Drancourt M."/>
        </authorList>
    </citation>
    <scope>NUCLEOTIDE SEQUENCE [LARGE SCALE GENOMIC DNA]</scope>
    <source>
        <strain>Marseille</strain>
    </source>
</reference>
<accession>A6T3L4</accession>
<gene>
    <name evidence="1" type="primary">rplL</name>
    <name type="ordered locus">mma_3421</name>
</gene>
<feature type="chain" id="PRO_1000007023" description="Large ribosomal subunit protein bL12">
    <location>
        <begin position="1"/>
        <end position="124"/>
    </location>
</feature>
<comment type="function">
    <text evidence="1">Forms part of the ribosomal stalk which helps the ribosome interact with GTP-bound translation factors. Is thus essential for accurate translation.</text>
</comment>
<comment type="subunit">
    <text evidence="1">Homodimer. Part of the ribosomal stalk of the 50S ribosomal subunit. Forms a multimeric L10(L12)X complex, where L10 forms an elongated spine to which 2 to 4 L12 dimers bind in a sequential fashion. Binds GTP-bound translation factors.</text>
</comment>
<comment type="similarity">
    <text evidence="1">Belongs to the bacterial ribosomal protein bL12 family.</text>
</comment>
<proteinExistence type="inferred from homology"/>
<dbReference type="EMBL" id="CP000269">
    <property type="protein sequence ID" value="ABR88500.1"/>
    <property type="molecule type" value="Genomic_DNA"/>
</dbReference>
<dbReference type="RefSeq" id="WP_012081258.1">
    <property type="nucleotide sequence ID" value="NC_009659.1"/>
</dbReference>
<dbReference type="SMR" id="A6T3L4"/>
<dbReference type="STRING" id="375286.mma_3421"/>
<dbReference type="KEGG" id="mms:mma_3421"/>
<dbReference type="eggNOG" id="COG0222">
    <property type="taxonomic scope" value="Bacteria"/>
</dbReference>
<dbReference type="HOGENOM" id="CLU_086499_3_2_4"/>
<dbReference type="OrthoDB" id="9811748at2"/>
<dbReference type="Proteomes" id="UP000006388">
    <property type="component" value="Chromosome"/>
</dbReference>
<dbReference type="GO" id="GO:0022625">
    <property type="term" value="C:cytosolic large ribosomal subunit"/>
    <property type="evidence" value="ECO:0007669"/>
    <property type="project" value="TreeGrafter"/>
</dbReference>
<dbReference type="GO" id="GO:0003729">
    <property type="term" value="F:mRNA binding"/>
    <property type="evidence" value="ECO:0007669"/>
    <property type="project" value="TreeGrafter"/>
</dbReference>
<dbReference type="GO" id="GO:0003735">
    <property type="term" value="F:structural constituent of ribosome"/>
    <property type="evidence" value="ECO:0007669"/>
    <property type="project" value="InterPro"/>
</dbReference>
<dbReference type="GO" id="GO:0006412">
    <property type="term" value="P:translation"/>
    <property type="evidence" value="ECO:0007669"/>
    <property type="project" value="UniProtKB-UniRule"/>
</dbReference>
<dbReference type="CDD" id="cd00387">
    <property type="entry name" value="Ribosomal_L7_L12"/>
    <property type="match status" value="1"/>
</dbReference>
<dbReference type="FunFam" id="3.30.1390.10:FF:000001">
    <property type="entry name" value="50S ribosomal protein L7/L12"/>
    <property type="match status" value="1"/>
</dbReference>
<dbReference type="Gene3D" id="3.30.1390.10">
    <property type="match status" value="1"/>
</dbReference>
<dbReference type="Gene3D" id="1.20.5.710">
    <property type="entry name" value="Single helix bin"/>
    <property type="match status" value="1"/>
</dbReference>
<dbReference type="HAMAP" id="MF_00368">
    <property type="entry name" value="Ribosomal_bL12"/>
    <property type="match status" value="1"/>
</dbReference>
<dbReference type="InterPro" id="IPR000206">
    <property type="entry name" value="Ribosomal_bL12"/>
</dbReference>
<dbReference type="InterPro" id="IPR013823">
    <property type="entry name" value="Ribosomal_bL12_C"/>
</dbReference>
<dbReference type="InterPro" id="IPR014719">
    <property type="entry name" value="Ribosomal_bL12_C/ClpS-like"/>
</dbReference>
<dbReference type="InterPro" id="IPR008932">
    <property type="entry name" value="Ribosomal_bL12_oligo"/>
</dbReference>
<dbReference type="InterPro" id="IPR036235">
    <property type="entry name" value="Ribosomal_bL12_oligo_N_sf"/>
</dbReference>
<dbReference type="NCBIfam" id="TIGR00855">
    <property type="entry name" value="L12"/>
    <property type="match status" value="1"/>
</dbReference>
<dbReference type="PANTHER" id="PTHR45987">
    <property type="entry name" value="39S RIBOSOMAL PROTEIN L12"/>
    <property type="match status" value="1"/>
</dbReference>
<dbReference type="PANTHER" id="PTHR45987:SF4">
    <property type="entry name" value="LARGE RIBOSOMAL SUBUNIT PROTEIN BL12M"/>
    <property type="match status" value="1"/>
</dbReference>
<dbReference type="Pfam" id="PF00542">
    <property type="entry name" value="Ribosomal_L12"/>
    <property type="match status" value="1"/>
</dbReference>
<dbReference type="Pfam" id="PF16320">
    <property type="entry name" value="Ribosomal_L12_N"/>
    <property type="match status" value="1"/>
</dbReference>
<dbReference type="SUPFAM" id="SSF54736">
    <property type="entry name" value="ClpS-like"/>
    <property type="match status" value="1"/>
</dbReference>
<dbReference type="SUPFAM" id="SSF48300">
    <property type="entry name" value="Ribosomal protein L7/12, oligomerisation (N-terminal) domain"/>
    <property type="match status" value="1"/>
</dbReference>
<sequence>MAISKDDILEAVGNLTVLELNDLVKAFEEKFGVSAAAMAAPAAGGAAGGAAAEEQTEFTVVLADFGANKVGVIKAVREITGLGLKEAKDLVDAAPKPLKEGVSKADAEAAKKKLEEAGAKAEIK</sequence>
<organism>
    <name type="scientific">Janthinobacterium sp. (strain Marseille)</name>
    <name type="common">Minibacterium massiliensis</name>
    <dbReference type="NCBI Taxonomy" id="375286"/>
    <lineage>
        <taxon>Bacteria</taxon>
        <taxon>Pseudomonadati</taxon>
        <taxon>Pseudomonadota</taxon>
        <taxon>Betaproteobacteria</taxon>
        <taxon>Burkholderiales</taxon>
        <taxon>Oxalobacteraceae</taxon>
        <taxon>Janthinobacterium</taxon>
    </lineage>
</organism>
<evidence type="ECO:0000255" key="1">
    <source>
        <dbReference type="HAMAP-Rule" id="MF_00368"/>
    </source>
</evidence>
<evidence type="ECO:0000305" key="2"/>